<protein>
    <recommendedName>
        <fullName evidence="2">tRNA (guanine-N(7)-)-methyltransferase</fullName>
        <ecNumber evidence="2">2.1.1.33</ecNumber>
    </recommendedName>
    <alternativeName>
        <fullName evidence="2">tRNA (guanine(46)-N(7))-methyltransferase</fullName>
    </alternativeName>
    <alternativeName>
        <fullName evidence="2">tRNA(m7G46)-methyltransferase</fullName>
    </alternativeName>
</protein>
<comment type="function">
    <text evidence="2">Catalyzes the formation of N(7)-methylguanine at position 46 (m7G46) in tRNA.</text>
</comment>
<comment type="catalytic activity">
    <reaction evidence="2">
        <text>guanosine(46) in tRNA + S-adenosyl-L-methionine = N(7)-methylguanosine(46) in tRNA + S-adenosyl-L-homocysteine</text>
        <dbReference type="Rhea" id="RHEA:42708"/>
        <dbReference type="Rhea" id="RHEA-COMP:10188"/>
        <dbReference type="Rhea" id="RHEA-COMP:10189"/>
        <dbReference type="ChEBI" id="CHEBI:57856"/>
        <dbReference type="ChEBI" id="CHEBI:59789"/>
        <dbReference type="ChEBI" id="CHEBI:74269"/>
        <dbReference type="ChEBI" id="CHEBI:74480"/>
        <dbReference type="EC" id="2.1.1.33"/>
    </reaction>
</comment>
<comment type="pathway">
    <text evidence="2">tRNA modification; N(7)-methylguanine-tRNA biosynthesis.</text>
</comment>
<comment type="similarity">
    <text evidence="2">Belongs to the class I-like SAM-binding methyltransferase superfamily. TrmB family.</text>
</comment>
<organism>
    <name type="scientific">Shewanella sp. (strain MR-7)</name>
    <dbReference type="NCBI Taxonomy" id="60481"/>
    <lineage>
        <taxon>Bacteria</taxon>
        <taxon>Pseudomonadati</taxon>
        <taxon>Pseudomonadota</taxon>
        <taxon>Gammaproteobacteria</taxon>
        <taxon>Alteromonadales</taxon>
        <taxon>Shewanellaceae</taxon>
        <taxon>Shewanella</taxon>
    </lineage>
</organism>
<keyword id="KW-0489">Methyltransferase</keyword>
<keyword id="KW-0949">S-adenosyl-L-methionine</keyword>
<keyword id="KW-0808">Transferase</keyword>
<keyword id="KW-0819">tRNA processing</keyword>
<name>TRMB_SHESR</name>
<reference key="1">
    <citation type="submission" date="2006-08" db="EMBL/GenBank/DDBJ databases">
        <title>Complete sequence of chromosome 1 of Shewanella sp. MR-7.</title>
        <authorList>
            <person name="Copeland A."/>
            <person name="Lucas S."/>
            <person name="Lapidus A."/>
            <person name="Barry K."/>
            <person name="Detter J.C."/>
            <person name="Glavina del Rio T."/>
            <person name="Hammon N."/>
            <person name="Israni S."/>
            <person name="Dalin E."/>
            <person name="Tice H."/>
            <person name="Pitluck S."/>
            <person name="Kiss H."/>
            <person name="Brettin T."/>
            <person name="Bruce D."/>
            <person name="Han C."/>
            <person name="Tapia R."/>
            <person name="Gilna P."/>
            <person name="Schmutz J."/>
            <person name="Larimer F."/>
            <person name="Land M."/>
            <person name="Hauser L."/>
            <person name="Kyrpides N."/>
            <person name="Mikhailova N."/>
            <person name="Nealson K."/>
            <person name="Konstantinidis K."/>
            <person name="Klappenbach J."/>
            <person name="Tiedje J."/>
            <person name="Richardson P."/>
        </authorList>
    </citation>
    <scope>NUCLEOTIDE SEQUENCE [LARGE SCALE GENOMIC DNA]</scope>
    <source>
        <strain>MR-7</strain>
    </source>
</reference>
<sequence>MSEVTTAEFNEEGKYLRKIRSFVLREGRLTKGQAQAIETQWPTMGLDYSPTPLNLTEVFGREADTVLEIGFGMGASLVQMAQEAPEQNFIGIEVHKPGVGSCLSDAAAAGVTNLRVYHHDAMEVLEHAIADGSLARVQLFFPDPWHKKRHHKRRIVQAEFAELIRRKLKIGGVFHMATDWENYSEHMLEVMNAANGYKNQSADGTVVPRPDHRPLTKFEARGHRLGHGVWDLMFERIA</sequence>
<evidence type="ECO:0000250" key="1"/>
<evidence type="ECO:0000255" key="2">
    <source>
        <dbReference type="HAMAP-Rule" id="MF_01057"/>
    </source>
</evidence>
<accession>Q0HXA4</accession>
<feature type="chain" id="PRO_0000288226" description="tRNA (guanine-N(7)-)-methyltransferase">
    <location>
        <begin position="1"/>
        <end position="238"/>
    </location>
</feature>
<feature type="active site" evidence="1">
    <location>
        <position position="143"/>
    </location>
</feature>
<feature type="binding site" evidence="2">
    <location>
        <position position="68"/>
    </location>
    <ligand>
        <name>S-adenosyl-L-methionine</name>
        <dbReference type="ChEBI" id="CHEBI:59789"/>
    </ligand>
</feature>
<feature type="binding site" evidence="2">
    <location>
        <position position="93"/>
    </location>
    <ligand>
        <name>S-adenosyl-L-methionine</name>
        <dbReference type="ChEBI" id="CHEBI:59789"/>
    </ligand>
</feature>
<feature type="binding site" evidence="2">
    <location>
        <position position="120"/>
    </location>
    <ligand>
        <name>S-adenosyl-L-methionine</name>
        <dbReference type="ChEBI" id="CHEBI:59789"/>
    </ligand>
</feature>
<feature type="binding site" evidence="2">
    <location>
        <position position="143"/>
    </location>
    <ligand>
        <name>S-adenosyl-L-methionine</name>
        <dbReference type="ChEBI" id="CHEBI:59789"/>
    </ligand>
</feature>
<feature type="binding site" evidence="2">
    <location>
        <position position="147"/>
    </location>
    <ligand>
        <name>substrate</name>
    </ligand>
</feature>
<feature type="binding site" evidence="2">
    <location>
        <position position="179"/>
    </location>
    <ligand>
        <name>substrate</name>
    </ligand>
</feature>
<feature type="binding site" evidence="2">
    <location>
        <begin position="216"/>
        <end position="219"/>
    </location>
    <ligand>
        <name>substrate</name>
    </ligand>
</feature>
<proteinExistence type="inferred from homology"/>
<gene>
    <name evidence="2" type="primary">trmB</name>
    <name type="ordered locus">Shewmr7_1252</name>
</gene>
<dbReference type="EC" id="2.1.1.33" evidence="2"/>
<dbReference type="EMBL" id="CP000444">
    <property type="protein sequence ID" value="ABI42251.1"/>
    <property type="molecule type" value="Genomic_DNA"/>
</dbReference>
<dbReference type="SMR" id="Q0HXA4"/>
<dbReference type="KEGG" id="shm:Shewmr7_1252"/>
<dbReference type="HOGENOM" id="CLU_050910_0_1_6"/>
<dbReference type="UniPathway" id="UPA00989"/>
<dbReference type="GO" id="GO:0043527">
    <property type="term" value="C:tRNA methyltransferase complex"/>
    <property type="evidence" value="ECO:0007669"/>
    <property type="project" value="TreeGrafter"/>
</dbReference>
<dbReference type="GO" id="GO:0008176">
    <property type="term" value="F:tRNA (guanine(46)-N7)-methyltransferase activity"/>
    <property type="evidence" value="ECO:0007669"/>
    <property type="project" value="UniProtKB-UniRule"/>
</dbReference>
<dbReference type="CDD" id="cd02440">
    <property type="entry name" value="AdoMet_MTases"/>
    <property type="match status" value="1"/>
</dbReference>
<dbReference type="FunFam" id="3.40.50.150:FF:000024">
    <property type="entry name" value="tRNA (guanine-N(7)-)-methyltransferase"/>
    <property type="match status" value="1"/>
</dbReference>
<dbReference type="Gene3D" id="3.40.50.150">
    <property type="entry name" value="Vaccinia Virus protein VP39"/>
    <property type="match status" value="1"/>
</dbReference>
<dbReference type="HAMAP" id="MF_01057">
    <property type="entry name" value="tRNA_methyltr_TrmB"/>
    <property type="match status" value="1"/>
</dbReference>
<dbReference type="InterPro" id="IPR029063">
    <property type="entry name" value="SAM-dependent_MTases_sf"/>
</dbReference>
<dbReference type="InterPro" id="IPR003358">
    <property type="entry name" value="tRNA_(Gua-N-7)_MeTrfase_Trmb"/>
</dbReference>
<dbReference type="InterPro" id="IPR055361">
    <property type="entry name" value="tRNA_methyltr_TrmB_bact"/>
</dbReference>
<dbReference type="NCBIfam" id="TIGR00091">
    <property type="entry name" value="tRNA (guanosine(46)-N7)-methyltransferase TrmB"/>
    <property type="match status" value="1"/>
</dbReference>
<dbReference type="PANTHER" id="PTHR23417">
    <property type="entry name" value="3-DEOXY-D-MANNO-OCTULOSONIC-ACID TRANSFERASE/TRNA GUANINE-N 7 - -METHYLTRANSFERASE"/>
    <property type="match status" value="1"/>
</dbReference>
<dbReference type="PANTHER" id="PTHR23417:SF14">
    <property type="entry name" value="PENTACOTRIPEPTIDE-REPEAT REGION OF PRORP DOMAIN-CONTAINING PROTEIN"/>
    <property type="match status" value="1"/>
</dbReference>
<dbReference type="Pfam" id="PF02390">
    <property type="entry name" value="Methyltransf_4"/>
    <property type="match status" value="1"/>
</dbReference>
<dbReference type="SUPFAM" id="SSF53335">
    <property type="entry name" value="S-adenosyl-L-methionine-dependent methyltransferases"/>
    <property type="match status" value="1"/>
</dbReference>
<dbReference type="PROSITE" id="PS51625">
    <property type="entry name" value="SAM_MT_TRMB"/>
    <property type="match status" value="1"/>
</dbReference>